<name>FIBB_PIG</name>
<dbReference type="STRING" id="9823.ENSSSCP00000009601"/>
<dbReference type="PaxDb" id="9823-ENSSSCP00000009601"/>
<dbReference type="PeptideAtlas" id="P14477"/>
<dbReference type="eggNOG" id="KOG2579">
    <property type="taxonomic scope" value="Eukaryota"/>
</dbReference>
<dbReference type="HOGENOM" id="CLU_038628_13_0_1"/>
<dbReference type="InParanoid" id="P14477"/>
<dbReference type="Proteomes" id="UP000008227">
    <property type="component" value="Unplaced"/>
</dbReference>
<dbReference type="Proteomes" id="UP000314985">
    <property type="component" value="Unplaced"/>
</dbReference>
<dbReference type="Proteomes" id="UP000694570">
    <property type="component" value="Unplaced"/>
</dbReference>
<dbReference type="Proteomes" id="UP000694571">
    <property type="component" value="Unplaced"/>
</dbReference>
<dbReference type="Proteomes" id="UP000694720">
    <property type="component" value="Unplaced"/>
</dbReference>
<dbReference type="Proteomes" id="UP000694722">
    <property type="component" value="Unplaced"/>
</dbReference>
<dbReference type="Proteomes" id="UP000694723">
    <property type="component" value="Unplaced"/>
</dbReference>
<dbReference type="Proteomes" id="UP000694724">
    <property type="component" value="Unplaced"/>
</dbReference>
<dbReference type="Proteomes" id="UP000694725">
    <property type="component" value="Unplaced"/>
</dbReference>
<dbReference type="Proteomes" id="UP000694726">
    <property type="component" value="Unplaced"/>
</dbReference>
<dbReference type="Proteomes" id="UP000694727">
    <property type="component" value="Unplaced"/>
</dbReference>
<dbReference type="Proteomes" id="UP000694728">
    <property type="component" value="Unplaced"/>
</dbReference>
<dbReference type="GO" id="GO:0005576">
    <property type="term" value="C:extracellular region"/>
    <property type="evidence" value="ECO:0007669"/>
    <property type="project" value="UniProtKB-SubCell"/>
</dbReference>
<dbReference type="GO" id="GO:0002250">
    <property type="term" value="P:adaptive immune response"/>
    <property type="evidence" value="ECO:0007669"/>
    <property type="project" value="UniProtKB-KW"/>
</dbReference>
<dbReference type="GO" id="GO:0007596">
    <property type="term" value="P:blood coagulation"/>
    <property type="evidence" value="ECO:0007669"/>
    <property type="project" value="UniProtKB-KW"/>
</dbReference>
<dbReference type="GO" id="GO:0045087">
    <property type="term" value="P:innate immune response"/>
    <property type="evidence" value="ECO:0007669"/>
    <property type="project" value="UniProtKB-KW"/>
</dbReference>
<comment type="function">
    <text evidence="1">Cleaved by the protease thrombin to yield monomers which, together with fibrinogen alpha (FGA) and fibrinogen gamma (FGG), polymerize to form an insoluble fibrin matrix. Fibrin has a major function in hemostasis as one of the primary components of blood clots. In addition, functions during the early stages of wound repair to stabilize the lesion and guide cell migration during re-epithelialization. Was originally thought to be essential for platelet aggregation, based on in vitro studies using anticoagulated blood. However subsequent studies have shown that it is not absolutely required for thrombus formation in vivo. Enhances expression of SELP in activated platelets. Maternal fibrinogen is essential for successful pregnancy. Fibrin deposition is also associated with infection, where it protects against IFNG-mediated hemorrhage. May also facilitate the antibacterial immune response via both innate and T-cell mediated pathways.</text>
</comment>
<comment type="subunit">
    <text evidence="2">Heterohexamer; disulfide linked. Contains 2 sets of 3 non-identical chains (alpha, beta and gamma). The 2 heterotrimers are in head to head conformation with the N-termini in a small central domain (By similarity).</text>
</comment>
<comment type="subcellular location">
    <subcellularLocation>
        <location>Secreted</location>
    </subcellularLocation>
</comment>
<comment type="domain">
    <text evidence="2">A long coiled coil structure formed by 3 polypeptide chains connects the central nodule to the C-terminal domains (distal nodules). The long C-terminal ends of the alpha chains fold back, contributing a fourth strand to the coiled coil structure.</text>
</comment>
<comment type="PTM">
    <text>Conversion of fibrinogen to fibrin is triggered by thrombin, which cleaves fibrinopeptides A and B from alpha and beta chains, and thus exposes the N-terminal polymerization sites responsible for the formation of the soft clot.</text>
</comment>
<reference key="1">
    <citation type="journal article" date="1965" name="Acta Chem. Scand.">
        <title>Studies on fibrinopeptides from mammals.</title>
        <authorList>
            <person name="Blombaeck B."/>
            <person name="Blombaeck M."/>
            <person name="Grondahl N.J."/>
        </authorList>
    </citation>
    <scope>PROTEIN SEQUENCE</scope>
    <scope>SULFATION AT TYR-4</scope>
</reference>
<keyword id="KW-1064">Adaptive immunity</keyword>
<keyword id="KW-0094">Blood coagulation</keyword>
<keyword id="KW-0175">Coiled coil</keyword>
<keyword id="KW-0903">Direct protein sequencing</keyword>
<keyword id="KW-1015">Disulfide bond</keyword>
<keyword id="KW-0356">Hemostasis</keyword>
<keyword id="KW-0391">Immunity</keyword>
<keyword id="KW-0399">Innate immunity</keyword>
<keyword id="KW-1185">Reference proteome</keyword>
<keyword id="KW-0964">Secreted</keyword>
<keyword id="KW-0765">Sulfation</keyword>
<evidence type="ECO:0000250" key="1">
    <source>
        <dbReference type="UniProtKB" id="E9PV24"/>
    </source>
</evidence>
<evidence type="ECO:0000250" key="2">
    <source>
        <dbReference type="UniProtKB" id="P02675"/>
    </source>
</evidence>
<evidence type="ECO:0000269" key="3">
    <source ref="1"/>
</evidence>
<feature type="peptide" id="PRO_0000009083" description="Fibrinopeptide B">
    <location>
        <begin position="1"/>
        <end position="19"/>
    </location>
</feature>
<feature type="modified residue" description="Sulfotyrosine" evidence="3">
    <location>
        <position position="4"/>
    </location>
</feature>
<feature type="non-terminal residue">
    <location>
        <position position="19"/>
    </location>
</feature>
<protein>
    <recommendedName>
        <fullName>Fibrinogen beta chain</fullName>
    </recommendedName>
    <component>
        <recommendedName>
            <fullName>Fibrinopeptide B</fullName>
        </recommendedName>
    </component>
</protein>
<gene>
    <name type="primary">FGB</name>
</gene>
<sequence>AIDYDEDEDGRPKVHVDAR</sequence>
<organism>
    <name type="scientific">Sus scrofa</name>
    <name type="common">Pig</name>
    <dbReference type="NCBI Taxonomy" id="9823"/>
    <lineage>
        <taxon>Eukaryota</taxon>
        <taxon>Metazoa</taxon>
        <taxon>Chordata</taxon>
        <taxon>Craniata</taxon>
        <taxon>Vertebrata</taxon>
        <taxon>Euteleostomi</taxon>
        <taxon>Mammalia</taxon>
        <taxon>Eutheria</taxon>
        <taxon>Laurasiatheria</taxon>
        <taxon>Artiodactyla</taxon>
        <taxon>Suina</taxon>
        <taxon>Suidae</taxon>
        <taxon>Sus</taxon>
    </lineage>
</organism>
<accession>P14477</accession>
<proteinExistence type="evidence at protein level"/>